<accession>Q1X6Y9</accession>
<sequence>IQSTNMDQQGSLTEDSMNSFIRTLIQAGIWKNKVPKQTARAKDDTQTTVKKTEAEADAVASKEARLGFQPIVSVDAELLRQQRRFSSPRVLLSENTPLEPPPLYLTEQPVALNRTSRRKREGKSHRGEYSVCDSESRWVTDKSSAVDIRGHQVTVLGEIRMGPS</sequence>
<reference key="1">
    <citation type="journal article" date="2006" name="Mol. Phylogenet. Evol.">
        <title>Dispersal and vicariance: the complex evolutionary history of boid snakes.</title>
        <authorList>
            <person name="Noonan B.P."/>
            <person name="Chippindale P.T."/>
        </authorList>
    </citation>
    <scope>NUCLEOTIDE SEQUENCE [GENOMIC DNA]</scope>
</reference>
<evidence type="ECO:0000250" key="1"/>
<evidence type="ECO:0000255" key="2"/>
<evidence type="ECO:0000305" key="3"/>
<name>NTF3_ACRDU</name>
<dbReference type="EMBL" id="AY988049">
    <property type="protein sequence ID" value="AAY44256.1"/>
    <property type="molecule type" value="Genomic_DNA"/>
</dbReference>
<dbReference type="SMR" id="Q1X6Y9"/>
<dbReference type="GlyCosmos" id="Q1X6Y9">
    <property type="glycosylation" value="1 site, No reported glycans"/>
</dbReference>
<dbReference type="GO" id="GO:0030424">
    <property type="term" value="C:axon"/>
    <property type="evidence" value="ECO:0007669"/>
    <property type="project" value="TreeGrafter"/>
</dbReference>
<dbReference type="GO" id="GO:0030425">
    <property type="term" value="C:dendrite"/>
    <property type="evidence" value="ECO:0007669"/>
    <property type="project" value="TreeGrafter"/>
</dbReference>
<dbReference type="GO" id="GO:0005615">
    <property type="term" value="C:extracellular space"/>
    <property type="evidence" value="ECO:0007669"/>
    <property type="project" value="TreeGrafter"/>
</dbReference>
<dbReference type="GO" id="GO:0008021">
    <property type="term" value="C:synaptic vesicle"/>
    <property type="evidence" value="ECO:0007669"/>
    <property type="project" value="TreeGrafter"/>
</dbReference>
<dbReference type="GO" id="GO:0008083">
    <property type="term" value="F:growth factor activity"/>
    <property type="evidence" value="ECO:0007669"/>
    <property type="project" value="UniProtKB-KW"/>
</dbReference>
<dbReference type="GO" id="GO:0005163">
    <property type="term" value="F:nerve growth factor receptor binding"/>
    <property type="evidence" value="ECO:0007669"/>
    <property type="project" value="TreeGrafter"/>
</dbReference>
<dbReference type="GO" id="GO:0007169">
    <property type="term" value="P:cell surface receptor protein tyrosine kinase signaling pathway"/>
    <property type="evidence" value="ECO:0007669"/>
    <property type="project" value="TreeGrafter"/>
</dbReference>
<dbReference type="GO" id="GO:0050804">
    <property type="term" value="P:modulation of chemical synaptic transmission"/>
    <property type="evidence" value="ECO:0007669"/>
    <property type="project" value="TreeGrafter"/>
</dbReference>
<dbReference type="GO" id="GO:0043524">
    <property type="term" value="P:negative regulation of neuron apoptotic process"/>
    <property type="evidence" value="ECO:0007669"/>
    <property type="project" value="TreeGrafter"/>
</dbReference>
<dbReference type="GO" id="GO:0021675">
    <property type="term" value="P:nerve development"/>
    <property type="evidence" value="ECO:0007669"/>
    <property type="project" value="TreeGrafter"/>
</dbReference>
<dbReference type="GO" id="GO:0038180">
    <property type="term" value="P:nerve growth factor signaling pathway"/>
    <property type="evidence" value="ECO:0007669"/>
    <property type="project" value="TreeGrafter"/>
</dbReference>
<dbReference type="GO" id="GO:0048812">
    <property type="term" value="P:neuron projection morphogenesis"/>
    <property type="evidence" value="ECO:0007669"/>
    <property type="project" value="TreeGrafter"/>
</dbReference>
<dbReference type="Gene3D" id="2.10.90.10">
    <property type="entry name" value="Cystine-knot cytokines"/>
    <property type="match status" value="1"/>
</dbReference>
<dbReference type="InterPro" id="IPR029034">
    <property type="entry name" value="Cystine-knot_cytokine"/>
</dbReference>
<dbReference type="InterPro" id="IPR020408">
    <property type="entry name" value="Nerve_growth_factor-like"/>
</dbReference>
<dbReference type="InterPro" id="IPR002072">
    <property type="entry name" value="Nerve_growth_factor-rel"/>
</dbReference>
<dbReference type="InterPro" id="IPR015578">
    <property type="entry name" value="Neurotrophin-3"/>
</dbReference>
<dbReference type="InterPro" id="IPR045815">
    <property type="entry name" value="NTF3_N"/>
</dbReference>
<dbReference type="PANTHER" id="PTHR11589">
    <property type="entry name" value="NERVE GROWTH FACTOR NGF -RELATED"/>
    <property type="match status" value="1"/>
</dbReference>
<dbReference type="PANTHER" id="PTHR11589:SF4">
    <property type="entry name" value="NEUROTROPHIN-3"/>
    <property type="match status" value="1"/>
</dbReference>
<dbReference type="Pfam" id="PF00243">
    <property type="entry name" value="NGF"/>
    <property type="match status" value="1"/>
</dbReference>
<dbReference type="Pfam" id="PF19338">
    <property type="entry name" value="NTF3_N"/>
    <property type="match status" value="1"/>
</dbReference>
<dbReference type="PIRSF" id="PIRSF001789">
    <property type="entry name" value="NGF"/>
    <property type="match status" value="1"/>
</dbReference>
<dbReference type="PRINTS" id="PR01914">
    <property type="entry name" value="NEUROTROPHN3"/>
</dbReference>
<dbReference type="SMART" id="SM00140">
    <property type="entry name" value="NGF"/>
    <property type="match status" value="1"/>
</dbReference>
<dbReference type="SUPFAM" id="SSF57501">
    <property type="entry name" value="Cystine-knot cytokines"/>
    <property type="match status" value="1"/>
</dbReference>
<dbReference type="PROSITE" id="PS50270">
    <property type="entry name" value="NGF_2"/>
    <property type="match status" value="1"/>
</dbReference>
<feature type="signal peptide" evidence="2">
    <location>
        <begin position="1" status="less than"/>
        <end position="3"/>
    </location>
</feature>
<feature type="propeptide" id="PRO_0000346703" evidence="1">
    <location>
        <begin position="4"/>
        <end position="119"/>
    </location>
</feature>
<feature type="chain" id="PRO_0000346704" description="Neurotrophin-3">
    <location>
        <begin position="120"/>
        <end position="164" status="greater than"/>
    </location>
</feature>
<feature type="glycosylation site" description="N-linked (GlcNAc...) asparagine" evidence="2">
    <location>
        <position position="113"/>
    </location>
</feature>
<feature type="non-terminal residue">
    <location>
        <position position="1"/>
    </location>
</feature>
<feature type="non-terminal residue">
    <location>
        <position position="164"/>
    </location>
</feature>
<organism>
    <name type="scientific">Acrantophis dumerili</name>
    <name type="common">Dumeril's ground boa</name>
    <name type="synonym">Boa dumerili</name>
    <dbReference type="NCBI Taxonomy" id="51850"/>
    <lineage>
        <taxon>Eukaryota</taxon>
        <taxon>Metazoa</taxon>
        <taxon>Chordata</taxon>
        <taxon>Craniata</taxon>
        <taxon>Vertebrata</taxon>
        <taxon>Euteleostomi</taxon>
        <taxon>Lepidosauria</taxon>
        <taxon>Squamata</taxon>
        <taxon>Bifurcata</taxon>
        <taxon>Unidentata</taxon>
        <taxon>Episquamata</taxon>
        <taxon>Toxicofera</taxon>
        <taxon>Serpentes</taxon>
        <taxon>Henophidia</taxon>
        <taxon>Boidae</taxon>
        <taxon>Boinae</taxon>
        <taxon>Acrantophis</taxon>
    </lineage>
</organism>
<gene>
    <name type="primary">NTF3</name>
</gene>
<comment type="function">
    <text evidence="1">Seems to promote the survival of visceral and proprioceptive sensory neurons.</text>
</comment>
<comment type="subcellular location">
    <subcellularLocation>
        <location evidence="1">Secreted</location>
    </subcellularLocation>
</comment>
<comment type="similarity">
    <text evidence="3">Belongs to the NGF-beta family.</text>
</comment>
<protein>
    <recommendedName>
        <fullName>Neurotrophin-3</fullName>
    </recommendedName>
</protein>
<proteinExistence type="inferred from homology"/>
<keyword id="KW-0165">Cleavage on pair of basic residues</keyword>
<keyword id="KW-0325">Glycoprotein</keyword>
<keyword id="KW-0339">Growth factor</keyword>
<keyword id="KW-0964">Secreted</keyword>
<keyword id="KW-0732">Signal</keyword>